<proteinExistence type="inferred from homology"/>
<comment type="function">
    <text evidence="2">Catalyzes the formation of N(7)-methylguanine at position 46 (m7G46) in tRNA.</text>
</comment>
<comment type="catalytic activity">
    <reaction evidence="2">
        <text>guanosine(46) in tRNA + S-adenosyl-L-methionine = N(7)-methylguanosine(46) in tRNA + S-adenosyl-L-homocysteine</text>
        <dbReference type="Rhea" id="RHEA:42708"/>
        <dbReference type="Rhea" id="RHEA-COMP:10188"/>
        <dbReference type="Rhea" id="RHEA-COMP:10189"/>
        <dbReference type="ChEBI" id="CHEBI:57856"/>
        <dbReference type="ChEBI" id="CHEBI:59789"/>
        <dbReference type="ChEBI" id="CHEBI:74269"/>
        <dbReference type="ChEBI" id="CHEBI:74480"/>
        <dbReference type="EC" id="2.1.1.33"/>
    </reaction>
</comment>
<comment type="pathway">
    <text evidence="2">tRNA modification; N(7)-methylguanine-tRNA biosynthesis.</text>
</comment>
<comment type="similarity">
    <text evidence="2">Belongs to the class I-like SAM-binding methyltransferase superfamily. TrmB family.</text>
</comment>
<reference key="1">
    <citation type="journal article" date="2002" name="J. Bacteriol.">
        <title>Whole-genome comparison of Mycobacterium tuberculosis clinical and laboratory strains.</title>
        <authorList>
            <person name="Fleischmann R.D."/>
            <person name="Alland D."/>
            <person name="Eisen J.A."/>
            <person name="Carpenter L."/>
            <person name="White O."/>
            <person name="Peterson J.D."/>
            <person name="DeBoy R.T."/>
            <person name="Dodson R.J."/>
            <person name="Gwinn M.L."/>
            <person name="Haft D.H."/>
            <person name="Hickey E.K."/>
            <person name="Kolonay J.F."/>
            <person name="Nelson W.C."/>
            <person name="Umayam L.A."/>
            <person name="Ermolaeva M.D."/>
            <person name="Salzberg S.L."/>
            <person name="Delcher A."/>
            <person name="Utterback T.R."/>
            <person name="Weidman J.F."/>
            <person name="Khouri H.M."/>
            <person name="Gill J."/>
            <person name="Mikula A."/>
            <person name="Bishai W."/>
            <person name="Jacobs W.R. Jr."/>
            <person name="Venter J.C."/>
            <person name="Fraser C.M."/>
        </authorList>
    </citation>
    <scope>NUCLEOTIDE SEQUENCE [LARGE SCALE GENOMIC DNA]</scope>
    <source>
        <strain>CDC 1551 / Oshkosh</strain>
    </source>
</reference>
<protein>
    <recommendedName>
        <fullName evidence="2">tRNA (guanine-N(7)-)-methyltransferase</fullName>
        <ecNumber evidence="2">2.1.1.33</ecNumber>
    </recommendedName>
    <alternativeName>
        <fullName evidence="2">tRNA (guanine(46)-N(7))-methyltransferase</fullName>
    </alternativeName>
    <alternativeName>
        <fullName evidence="2">tRNA(m7G46)-methyltransferase</fullName>
    </alternativeName>
</protein>
<evidence type="ECO:0000250" key="1"/>
<evidence type="ECO:0000255" key="2">
    <source>
        <dbReference type="HAMAP-Rule" id="MF_01057"/>
    </source>
</evidence>
<evidence type="ECO:0000256" key="3">
    <source>
        <dbReference type="SAM" id="MobiDB-lite"/>
    </source>
</evidence>
<keyword id="KW-0489">Methyltransferase</keyword>
<keyword id="KW-1185">Reference proteome</keyword>
<keyword id="KW-0949">S-adenosyl-L-methionine</keyword>
<keyword id="KW-0808">Transferase</keyword>
<keyword id="KW-0819">tRNA processing</keyword>
<organism>
    <name type="scientific">Mycobacterium tuberculosis (strain CDC 1551 / Oshkosh)</name>
    <dbReference type="NCBI Taxonomy" id="83331"/>
    <lineage>
        <taxon>Bacteria</taxon>
        <taxon>Bacillati</taxon>
        <taxon>Actinomycetota</taxon>
        <taxon>Actinomycetes</taxon>
        <taxon>Mycobacteriales</taxon>
        <taxon>Mycobacteriaceae</taxon>
        <taxon>Mycobacterium</taxon>
        <taxon>Mycobacterium tuberculosis complex</taxon>
    </lineage>
</organism>
<dbReference type="EC" id="2.1.1.33" evidence="2"/>
<dbReference type="EMBL" id="AE000516">
    <property type="protein sequence ID" value="AAK44439.1"/>
    <property type="molecule type" value="Genomic_DNA"/>
</dbReference>
<dbReference type="PIR" id="F70959">
    <property type="entry name" value="F70959"/>
</dbReference>
<dbReference type="RefSeq" id="WP_003401204.1">
    <property type="nucleotide sequence ID" value="NZ_KK341227.1"/>
</dbReference>
<dbReference type="SMR" id="P9WFY8"/>
<dbReference type="GeneID" id="45424179"/>
<dbReference type="KEGG" id="mtc:MT0218"/>
<dbReference type="PATRIC" id="fig|83331.31.peg.237"/>
<dbReference type="HOGENOM" id="CLU_050910_0_2_11"/>
<dbReference type="UniPathway" id="UPA00989"/>
<dbReference type="Proteomes" id="UP000001020">
    <property type="component" value="Chromosome"/>
</dbReference>
<dbReference type="GO" id="GO:0043527">
    <property type="term" value="C:tRNA methyltransferase complex"/>
    <property type="evidence" value="ECO:0007669"/>
    <property type="project" value="TreeGrafter"/>
</dbReference>
<dbReference type="GO" id="GO:0008176">
    <property type="term" value="F:tRNA (guanine(46)-N7)-methyltransferase activity"/>
    <property type="evidence" value="ECO:0007669"/>
    <property type="project" value="UniProtKB-UniRule"/>
</dbReference>
<dbReference type="CDD" id="cd02440">
    <property type="entry name" value="AdoMet_MTases"/>
    <property type="match status" value="1"/>
</dbReference>
<dbReference type="FunFam" id="3.40.50.150:FF:000035">
    <property type="entry name" value="tRNA (guanine-N(7)-)-methyltransferase"/>
    <property type="match status" value="1"/>
</dbReference>
<dbReference type="Gene3D" id="3.40.50.150">
    <property type="entry name" value="Vaccinia Virus protein VP39"/>
    <property type="match status" value="1"/>
</dbReference>
<dbReference type="HAMAP" id="MF_01057">
    <property type="entry name" value="tRNA_methyltr_TrmB"/>
    <property type="match status" value="1"/>
</dbReference>
<dbReference type="InterPro" id="IPR029063">
    <property type="entry name" value="SAM-dependent_MTases_sf"/>
</dbReference>
<dbReference type="InterPro" id="IPR003358">
    <property type="entry name" value="tRNA_(Gua-N-7)_MeTrfase_Trmb"/>
</dbReference>
<dbReference type="InterPro" id="IPR055361">
    <property type="entry name" value="tRNA_methyltr_TrmB_bact"/>
</dbReference>
<dbReference type="NCBIfam" id="TIGR00091">
    <property type="entry name" value="tRNA (guanosine(46)-N7)-methyltransferase TrmB"/>
    <property type="match status" value="1"/>
</dbReference>
<dbReference type="PANTHER" id="PTHR23417">
    <property type="entry name" value="3-DEOXY-D-MANNO-OCTULOSONIC-ACID TRANSFERASE/TRNA GUANINE-N 7 - -METHYLTRANSFERASE"/>
    <property type="match status" value="1"/>
</dbReference>
<dbReference type="PANTHER" id="PTHR23417:SF14">
    <property type="entry name" value="PENTACOTRIPEPTIDE-REPEAT REGION OF PRORP DOMAIN-CONTAINING PROTEIN"/>
    <property type="match status" value="1"/>
</dbReference>
<dbReference type="Pfam" id="PF02390">
    <property type="entry name" value="Methyltransf_4"/>
    <property type="match status" value="1"/>
</dbReference>
<dbReference type="SUPFAM" id="SSF53335">
    <property type="entry name" value="S-adenosyl-L-methionine-dependent methyltransferases"/>
    <property type="match status" value="1"/>
</dbReference>
<dbReference type="PROSITE" id="PS51625">
    <property type="entry name" value="SAM_MT_TRMB"/>
    <property type="match status" value="1"/>
</dbReference>
<feature type="chain" id="PRO_0000428454" description="tRNA (guanine-N(7)-)-methyltransferase">
    <location>
        <begin position="1"/>
        <end position="263"/>
    </location>
</feature>
<feature type="region of interest" description="Disordered" evidence="3">
    <location>
        <begin position="1"/>
        <end position="39"/>
    </location>
</feature>
<feature type="active site" evidence="1">
    <location>
        <position position="159"/>
    </location>
</feature>
<feature type="binding site" evidence="2">
    <location>
        <position position="82"/>
    </location>
    <ligand>
        <name>S-adenosyl-L-methionine</name>
        <dbReference type="ChEBI" id="CHEBI:59789"/>
    </ligand>
</feature>
<feature type="binding site" evidence="2">
    <location>
        <position position="107"/>
    </location>
    <ligand>
        <name>S-adenosyl-L-methionine</name>
        <dbReference type="ChEBI" id="CHEBI:59789"/>
    </ligand>
</feature>
<feature type="binding site" evidence="2">
    <location>
        <position position="136"/>
    </location>
    <ligand>
        <name>S-adenosyl-L-methionine</name>
        <dbReference type="ChEBI" id="CHEBI:59789"/>
    </ligand>
</feature>
<feature type="binding site" evidence="2">
    <location>
        <position position="159"/>
    </location>
    <ligand>
        <name>S-adenosyl-L-methionine</name>
        <dbReference type="ChEBI" id="CHEBI:59789"/>
    </ligand>
</feature>
<feature type="binding site" evidence="2">
    <location>
        <position position="163"/>
    </location>
    <ligand>
        <name>substrate</name>
    </ligand>
</feature>
<feature type="binding site" evidence="2">
    <location>
        <position position="195"/>
    </location>
    <ligand>
        <name>substrate</name>
    </ligand>
</feature>
<feature type="binding site" evidence="2">
    <location>
        <begin position="232"/>
        <end position="235"/>
    </location>
    <ligand>
        <name>substrate</name>
    </ligand>
</feature>
<sequence length="263" mass="28547">MVHHGQMHAQPGVGLRPDTPVASGQLPSTSIRSRRSGISKAQRETWERLWPELGLLALPQSPRGTPVDTRAWFGRDAPVVLEIGSGSGTSTLAMAKAEPHVDVIAVDVYRRGLAQLLCAIDKVGSDGINIRLILGNAVDVLQHLIAPDSLCGVRVFFPDPWPKARHHKRRLLQPATMALIADRLVPSGVLHAATDHPGYAEHIAAAGDAEPRLVRVDPDTELLPISVVRPATKYERKAQLGGGAVIELLWKKHGCSERDLKIR</sequence>
<accession>P9WFY8</accession>
<accession>L0T600</accession>
<accession>P67498</accession>
<accession>P96390</accession>
<name>TRMB_MYCTO</name>
<gene>
    <name evidence="2" type="primary">trmB</name>
    <name type="ordered locus">MT0218</name>
</gene>